<name>NUOH_PSYA2</name>
<proteinExistence type="inferred from homology"/>
<organism>
    <name type="scientific">Psychrobacter arcticus (strain DSM 17307 / VKM B-2377 / 273-4)</name>
    <dbReference type="NCBI Taxonomy" id="259536"/>
    <lineage>
        <taxon>Bacteria</taxon>
        <taxon>Pseudomonadati</taxon>
        <taxon>Pseudomonadota</taxon>
        <taxon>Gammaproteobacteria</taxon>
        <taxon>Moraxellales</taxon>
        <taxon>Moraxellaceae</taxon>
        <taxon>Psychrobacter</taxon>
    </lineage>
</organism>
<gene>
    <name evidence="1" type="primary">nuoH</name>
    <name type="ordered locus">Psyc_0590</name>
</gene>
<protein>
    <recommendedName>
        <fullName evidence="1">NADH-quinone oxidoreductase subunit H</fullName>
        <ecNumber evidence="1">7.1.1.-</ecNumber>
    </recommendedName>
    <alternativeName>
        <fullName evidence="1">NADH dehydrogenase I subunit H</fullName>
    </alternativeName>
    <alternativeName>
        <fullName evidence="1">NDH-1 subunit H</fullName>
    </alternativeName>
</protein>
<keyword id="KW-0997">Cell inner membrane</keyword>
<keyword id="KW-1003">Cell membrane</keyword>
<keyword id="KW-0472">Membrane</keyword>
<keyword id="KW-0520">NAD</keyword>
<keyword id="KW-0874">Quinone</keyword>
<keyword id="KW-1185">Reference proteome</keyword>
<keyword id="KW-1278">Translocase</keyword>
<keyword id="KW-0812">Transmembrane</keyword>
<keyword id="KW-1133">Transmembrane helix</keyword>
<keyword id="KW-0830">Ubiquinone</keyword>
<sequence>MQVTRIIPDVPSFLASMMTFDTWSILFMVVQSLVIFLVVVIVAAMMIIYERRMLALWQDRYGPNRVGPFGSLQLVADMLKIFFKEDWTPNFTDKFMFTLAPAVAMFTALASFAIIPISPTLGVADWDIGILFFFAMAGIAVYAVLFGGWASANKFSLLGGLRSAAQTISYEVFLGLSLMGVVALTGSFNLRAIVEAQADGWYIIPQFFGFLTFVVAGVAVTHRHPFDQPEAEQELAEGYHVEYSGMKFGMFFIGEYVNVVLISALMTCLFFGGWLAPFNLDIPFIPPAFWFMIKTLFFMTMFILARGSLMRPRYDQVMNFGWKVCLPVTLINLLVTAAVILIFSPTL</sequence>
<comment type="function">
    <text evidence="1">NDH-1 shuttles electrons from NADH, via FMN and iron-sulfur (Fe-S) centers, to quinones in the respiratory chain. The immediate electron acceptor for the enzyme in this species is believed to be ubiquinone. Couples the redox reaction to proton translocation (for every two electrons transferred, four hydrogen ions are translocated across the cytoplasmic membrane), and thus conserves the redox energy in a proton gradient. This subunit may bind ubiquinone.</text>
</comment>
<comment type="catalytic activity">
    <reaction evidence="1">
        <text>a quinone + NADH + 5 H(+)(in) = a quinol + NAD(+) + 4 H(+)(out)</text>
        <dbReference type="Rhea" id="RHEA:57888"/>
        <dbReference type="ChEBI" id="CHEBI:15378"/>
        <dbReference type="ChEBI" id="CHEBI:24646"/>
        <dbReference type="ChEBI" id="CHEBI:57540"/>
        <dbReference type="ChEBI" id="CHEBI:57945"/>
        <dbReference type="ChEBI" id="CHEBI:132124"/>
    </reaction>
</comment>
<comment type="subunit">
    <text evidence="1">NDH-1 is composed of 14 different subunits. Subunits NuoA, H, J, K, L, M, N constitute the membrane sector of the complex.</text>
</comment>
<comment type="subcellular location">
    <subcellularLocation>
        <location evidence="1">Cell inner membrane</location>
        <topology evidence="1">Multi-pass membrane protein</topology>
    </subcellularLocation>
</comment>
<comment type="similarity">
    <text evidence="1">Belongs to the complex I subunit 1 family.</text>
</comment>
<feature type="chain" id="PRO_0000244931" description="NADH-quinone oxidoreductase subunit H">
    <location>
        <begin position="1"/>
        <end position="347"/>
    </location>
</feature>
<feature type="transmembrane region" description="Helical" evidence="1">
    <location>
        <begin position="25"/>
        <end position="45"/>
    </location>
</feature>
<feature type="transmembrane region" description="Helical" evidence="1">
    <location>
        <begin position="95"/>
        <end position="115"/>
    </location>
</feature>
<feature type="transmembrane region" description="Helical" evidence="1">
    <location>
        <begin position="128"/>
        <end position="148"/>
    </location>
</feature>
<feature type="transmembrane region" description="Helical" evidence="1">
    <location>
        <begin position="168"/>
        <end position="188"/>
    </location>
</feature>
<feature type="transmembrane region" description="Helical" evidence="1">
    <location>
        <begin position="200"/>
        <end position="220"/>
    </location>
</feature>
<feature type="transmembrane region" description="Helical" evidence="1">
    <location>
        <begin position="251"/>
        <end position="271"/>
    </location>
</feature>
<feature type="transmembrane region" description="Helical" evidence="1">
    <location>
        <begin position="284"/>
        <end position="304"/>
    </location>
</feature>
<feature type="transmembrane region" description="Helical" evidence="1">
    <location>
        <begin position="324"/>
        <end position="344"/>
    </location>
</feature>
<reference key="1">
    <citation type="journal article" date="2010" name="Appl. Environ. Microbiol.">
        <title>The genome sequence of Psychrobacter arcticus 273-4, a psychroactive Siberian permafrost bacterium, reveals mechanisms for adaptation to low-temperature growth.</title>
        <authorList>
            <person name="Ayala-del-Rio H.L."/>
            <person name="Chain P.S."/>
            <person name="Grzymski J.J."/>
            <person name="Ponder M.A."/>
            <person name="Ivanova N."/>
            <person name="Bergholz P.W."/>
            <person name="Di Bartolo G."/>
            <person name="Hauser L."/>
            <person name="Land M."/>
            <person name="Bakermans C."/>
            <person name="Rodrigues D."/>
            <person name="Klappenbach J."/>
            <person name="Zarka D."/>
            <person name="Larimer F."/>
            <person name="Richardson P."/>
            <person name="Murray A."/>
            <person name="Thomashow M."/>
            <person name="Tiedje J.M."/>
        </authorList>
    </citation>
    <scope>NUCLEOTIDE SEQUENCE [LARGE SCALE GENOMIC DNA]</scope>
    <source>
        <strain>DSM 17307 / VKM B-2377 / 273-4</strain>
    </source>
</reference>
<accession>Q4FU58</accession>
<evidence type="ECO:0000255" key="1">
    <source>
        <dbReference type="HAMAP-Rule" id="MF_01350"/>
    </source>
</evidence>
<dbReference type="EC" id="7.1.1.-" evidence="1"/>
<dbReference type="EMBL" id="CP000082">
    <property type="protein sequence ID" value="AAZ18450.1"/>
    <property type="molecule type" value="Genomic_DNA"/>
</dbReference>
<dbReference type="SMR" id="Q4FU58"/>
<dbReference type="STRING" id="259536.Psyc_0590"/>
<dbReference type="KEGG" id="par:Psyc_0590"/>
<dbReference type="eggNOG" id="COG1005">
    <property type="taxonomic scope" value="Bacteria"/>
</dbReference>
<dbReference type="HOGENOM" id="CLU_015134_0_1_6"/>
<dbReference type="OrthoDB" id="9803734at2"/>
<dbReference type="Proteomes" id="UP000000546">
    <property type="component" value="Chromosome"/>
</dbReference>
<dbReference type="GO" id="GO:0005886">
    <property type="term" value="C:plasma membrane"/>
    <property type="evidence" value="ECO:0007669"/>
    <property type="project" value="UniProtKB-SubCell"/>
</dbReference>
<dbReference type="GO" id="GO:0003954">
    <property type="term" value="F:NADH dehydrogenase activity"/>
    <property type="evidence" value="ECO:0007669"/>
    <property type="project" value="TreeGrafter"/>
</dbReference>
<dbReference type="GO" id="GO:0016655">
    <property type="term" value="F:oxidoreductase activity, acting on NAD(P)H, quinone or similar compound as acceptor"/>
    <property type="evidence" value="ECO:0007669"/>
    <property type="project" value="UniProtKB-UniRule"/>
</dbReference>
<dbReference type="GO" id="GO:0048038">
    <property type="term" value="F:quinone binding"/>
    <property type="evidence" value="ECO:0007669"/>
    <property type="project" value="UniProtKB-KW"/>
</dbReference>
<dbReference type="GO" id="GO:0009060">
    <property type="term" value="P:aerobic respiration"/>
    <property type="evidence" value="ECO:0007669"/>
    <property type="project" value="TreeGrafter"/>
</dbReference>
<dbReference type="HAMAP" id="MF_01350">
    <property type="entry name" value="NDH1_NuoH"/>
    <property type="match status" value="1"/>
</dbReference>
<dbReference type="InterPro" id="IPR001694">
    <property type="entry name" value="NADH_UbQ_OxRdtase_su1/FPO"/>
</dbReference>
<dbReference type="InterPro" id="IPR018086">
    <property type="entry name" value="NADH_UbQ_OxRdtase_su1_CS"/>
</dbReference>
<dbReference type="NCBIfam" id="NF004740">
    <property type="entry name" value="PRK06076.1-1"/>
    <property type="match status" value="1"/>
</dbReference>
<dbReference type="NCBIfam" id="NF004741">
    <property type="entry name" value="PRK06076.1-2"/>
    <property type="match status" value="1"/>
</dbReference>
<dbReference type="PANTHER" id="PTHR11432">
    <property type="entry name" value="NADH DEHYDROGENASE SUBUNIT 1"/>
    <property type="match status" value="1"/>
</dbReference>
<dbReference type="PANTHER" id="PTHR11432:SF3">
    <property type="entry name" value="NADH-UBIQUINONE OXIDOREDUCTASE CHAIN 1"/>
    <property type="match status" value="1"/>
</dbReference>
<dbReference type="Pfam" id="PF00146">
    <property type="entry name" value="NADHdh"/>
    <property type="match status" value="1"/>
</dbReference>
<dbReference type="PROSITE" id="PS00667">
    <property type="entry name" value="COMPLEX1_ND1_1"/>
    <property type="match status" value="1"/>
</dbReference>
<dbReference type="PROSITE" id="PS00668">
    <property type="entry name" value="COMPLEX1_ND1_2"/>
    <property type="match status" value="1"/>
</dbReference>